<feature type="signal peptide" evidence="1">
    <location>
        <begin position="1"/>
        <end position="22"/>
    </location>
</feature>
<feature type="chain" id="PRO_0000227529" description="Carboxypeptidase inhibitor" evidence="1">
    <location>
        <begin position="23"/>
        <end position="97"/>
    </location>
</feature>
<feature type="helix" evidence="5">
    <location>
        <begin position="24"/>
        <end position="27"/>
    </location>
</feature>
<feature type="strand" evidence="5">
    <location>
        <begin position="31"/>
        <end position="33"/>
    </location>
</feature>
<feature type="helix" evidence="5">
    <location>
        <begin position="35"/>
        <end position="37"/>
    </location>
</feature>
<feature type="helix" evidence="5">
    <location>
        <begin position="40"/>
        <end position="42"/>
    </location>
</feature>
<feature type="strand" evidence="5">
    <location>
        <begin position="50"/>
        <end position="54"/>
    </location>
</feature>
<feature type="helix" evidence="5">
    <location>
        <begin position="56"/>
        <end position="58"/>
    </location>
</feature>
<feature type="helix" evidence="5">
    <location>
        <begin position="63"/>
        <end position="65"/>
    </location>
</feature>
<feature type="strand" evidence="5">
    <location>
        <begin position="68"/>
        <end position="71"/>
    </location>
</feature>
<feature type="strand" evidence="6">
    <location>
        <begin position="76"/>
        <end position="78"/>
    </location>
</feature>
<feature type="helix" evidence="5">
    <location>
        <begin position="80"/>
        <end position="86"/>
    </location>
</feature>
<feature type="strand" evidence="5">
    <location>
        <begin position="90"/>
        <end position="93"/>
    </location>
</feature>
<dbReference type="EMBL" id="AY794405">
    <property type="protein sequence ID" value="AAW72225.1"/>
    <property type="molecule type" value="mRNA"/>
</dbReference>
<dbReference type="PDB" id="1ZLH">
    <property type="method" value="X-ray"/>
    <property type="resolution" value="1.70 A"/>
    <property type="chains" value="B=23-97"/>
</dbReference>
<dbReference type="PDB" id="1ZLI">
    <property type="method" value="X-ray"/>
    <property type="resolution" value="2.09 A"/>
    <property type="chains" value="B=23-97"/>
</dbReference>
<dbReference type="PDB" id="2JTO">
    <property type="method" value="NMR"/>
    <property type="chains" value="A=23-97"/>
</dbReference>
<dbReference type="PDB" id="2K2X">
    <property type="method" value="NMR"/>
    <property type="chains" value="A=23-97"/>
</dbReference>
<dbReference type="PDB" id="2K2Y">
    <property type="method" value="NMR"/>
    <property type="chains" value="A=23-61"/>
</dbReference>
<dbReference type="PDB" id="2K2Z">
    <property type="method" value="NMR"/>
    <property type="chains" value="A=59-97"/>
</dbReference>
<dbReference type="PDB" id="3D4U">
    <property type="method" value="X-ray"/>
    <property type="resolution" value="1.70 A"/>
    <property type="chains" value="B=23-96"/>
</dbReference>
<dbReference type="PDB" id="3LMS">
    <property type="method" value="X-ray"/>
    <property type="resolution" value="2.50 A"/>
    <property type="chains" value="B=23-96"/>
</dbReference>
<dbReference type="PDB" id="3OSL">
    <property type="method" value="X-ray"/>
    <property type="resolution" value="6.00 A"/>
    <property type="chains" value="B/D=23-96"/>
</dbReference>
<dbReference type="PDBsum" id="1ZLH"/>
<dbReference type="PDBsum" id="1ZLI"/>
<dbReference type="PDBsum" id="2JTO"/>
<dbReference type="PDBsum" id="2K2X"/>
<dbReference type="PDBsum" id="2K2Y"/>
<dbReference type="PDBsum" id="2K2Z"/>
<dbReference type="PDBsum" id="3D4U"/>
<dbReference type="PDBsum" id="3LMS"/>
<dbReference type="PDBsum" id="3OSL"/>
<dbReference type="BMRB" id="Q5EPH2"/>
<dbReference type="SMR" id="Q5EPH2"/>
<dbReference type="MEROPS" id="I68.001"/>
<dbReference type="EvolutionaryTrace" id="Q5EPH2"/>
<dbReference type="GO" id="GO:0005576">
    <property type="term" value="C:extracellular region"/>
    <property type="evidence" value="ECO:0007669"/>
    <property type="project" value="UniProtKB-SubCell"/>
</dbReference>
<dbReference type="GO" id="GO:0004857">
    <property type="term" value="F:enzyme inhibitor activity"/>
    <property type="evidence" value="ECO:0000314"/>
    <property type="project" value="UniProtKB"/>
</dbReference>
<dbReference type="GO" id="GO:0008191">
    <property type="term" value="F:metalloendopeptidase inhibitor activity"/>
    <property type="evidence" value="ECO:0000314"/>
    <property type="project" value="UniProtKB"/>
</dbReference>
<dbReference type="GO" id="GO:0090729">
    <property type="term" value="F:toxin activity"/>
    <property type="evidence" value="ECO:0007669"/>
    <property type="project" value="UniProtKB-KW"/>
</dbReference>
<dbReference type="GO" id="GO:0044002">
    <property type="term" value="P:acquisition of nutrients from host"/>
    <property type="evidence" value="ECO:0000314"/>
    <property type="project" value="UniProtKB"/>
</dbReference>
<dbReference type="Gene3D" id="2.20.20.10">
    <property type="entry name" value="Anthopleurin-A"/>
    <property type="match status" value="1"/>
</dbReference>
<dbReference type="Gene3D" id="3.30.1680.50">
    <property type="entry name" value="Carboxypeptidase inhibitor, N-terminal domain"/>
    <property type="match status" value="1"/>
</dbReference>
<dbReference type="InterPro" id="IPR019509">
    <property type="entry name" value="Carboxypeptidase_inhibitor_I68"/>
</dbReference>
<dbReference type="InterPro" id="IPR023355">
    <property type="entry name" value="Myo_ane_neurotoxin_sf"/>
</dbReference>
<dbReference type="Pfam" id="PF10468">
    <property type="entry name" value="Inhibitor_I68"/>
    <property type="match status" value="1"/>
</dbReference>
<dbReference type="SUPFAM" id="SSF57392">
    <property type="entry name" value="Defensin-like"/>
    <property type="match status" value="2"/>
</dbReference>
<accession>Q5EPH2</accession>
<comment type="function">
    <text evidence="1 2">Potent competitive inhibitor of metallo-carboxypeptidases CPA1, CPA2, CPB, CPN, and TAF1a (PubMed:15561703). Also inhibits human CPA4 (PubMed:20385563). Accelerates fibrinolysis in vitro and may contribute to the maintenance of host blood liquidity during feeding (PubMed:15561703).</text>
</comment>
<comment type="subcellular location">
    <subcellularLocation>
        <location>Secreted</location>
    </subcellularLocation>
</comment>
<comment type="mass spectrometry" mass="7798.0" method="MALDI" evidence="1"/>
<comment type="similarity">
    <text evidence="3">Belongs to the protease inhibitor I68 family.</text>
</comment>
<reference evidence="3 4" key="1">
    <citation type="journal article" date="2005" name="J. Biol. Chem.">
        <title>A carboxypeptidase inhibitor from the tick Rhipicephalus bursa. Isolation, cDNA cloning, recombinant expression, and characterization.</title>
        <authorList>
            <person name="Arolas J.L."/>
            <person name="Lorenzo J."/>
            <person name="Rovira A."/>
            <person name="Castella J."/>
            <person name="Aviles F.X."/>
            <person name="Sommerhoff C.P."/>
        </authorList>
    </citation>
    <scope>NUCLEOTIDE SEQUENCE [MRNA]</scope>
    <scope>PROTEIN SEQUENCE OF 23-52</scope>
    <scope>FUNCTION</scope>
    <scope>MASS SPECTROMETRY</scope>
</reference>
<reference key="2">
    <citation type="journal article" date="2010" name="J. Biol. Chem.">
        <title>Characterization of the substrate specificity of human carboxypeptidase A4 and implications for a role in extracellular peptide processing.</title>
        <authorList>
            <person name="Tanco S."/>
            <person name="Zhang X."/>
            <person name="Morano C."/>
            <person name="Aviles F.X."/>
            <person name="Lorenzo J."/>
            <person name="Fricker L.D."/>
        </authorList>
    </citation>
    <scope>FUNCTION</scope>
</reference>
<organism>
    <name type="scientific">Rhipicephalus bursa</name>
    <name type="common">Tick</name>
    <dbReference type="NCBI Taxonomy" id="67831"/>
    <lineage>
        <taxon>Eukaryota</taxon>
        <taxon>Metazoa</taxon>
        <taxon>Ecdysozoa</taxon>
        <taxon>Arthropoda</taxon>
        <taxon>Chelicerata</taxon>
        <taxon>Arachnida</taxon>
        <taxon>Acari</taxon>
        <taxon>Parasitiformes</taxon>
        <taxon>Ixodida</taxon>
        <taxon>Ixodoidea</taxon>
        <taxon>Ixodidae</taxon>
        <taxon>Rhipicephalinae</taxon>
        <taxon>Rhipicephalus</taxon>
        <taxon>Rhipicephalus</taxon>
    </lineage>
</organism>
<protein>
    <recommendedName>
        <fullName>Carboxypeptidase inhibitor</fullName>
    </recommendedName>
    <alternativeName>
        <fullName>TCI</fullName>
    </alternativeName>
</protein>
<keyword id="KW-0002">3D-structure</keyword>
<keyword id="KW-0903">Direct protein sequencing</keyword>
<keyword id="KW-1205">Fibrinolytic toxin</keyword>
<keyword id="KW-1199">Hemostasis impairing toxin</keyword>
<keyword id="KW-0481">Metalloenzyme inhibitor</keyword>
<keyword id="KW-0483">Metalloprotease inhibitor</keyword>
<keyword id="KW-0646">Protease inhibitor</keyword>
<keyword id="KW-0964">Secreted</keyword>
<keyword id="KW-0732">Signal</keyword>
<keyword id="KW-0800">Toxin</keyword>
<evidence type="ECO:0000269" key="1">
    <source>
    </source>
</evidence>
<evidence type="ECO:0000269" key="2">
    <source>
    </source>
</evidence>
<evidence type="ECO:0000305" key="3"/>
<evidence type="ECO:0000312" key="4">
    <source>
        <dbReference type="EMBL" id="AAW72225.1"/>
    </source>
</evidence>
<evidence type="ECO:0007829" key="5">
    <source>
        <dbReference type="PDB" id="1ZLH"/>
    </source>
</evidence>
<evidence type="ECO:0007829" key="6">
    <source>
        <dbReference type="PDB" id="3LMS"/>
    </source>
</evidence>
<sequence length="97" mass="10189">MAATLPVFAVVFFAMVLASSQANECVSKGFGCLPQSDCPQEARLSYGGCSTVCCDLSKLTGCKGKGGECNPLDRQCKELQAESASCGKGQKCCVWLH</sequence>
<name>TCI1_RHIBU</name>
<proteinExistence type="evidence at protein level"/>